<name>TRIM2_AILME</name>
<reference key="1">
    <citation type="journal article" date="2010" name="Nature">
        <title>The sequence and de novo assembly of the giant panda genome.</title>
        <authorList>
            <person name="Li R."/>
            <person name="Fan W."/>
            <person name="Tian G."/>
            <person name="Zhu H."/>
            <person name="He L."/>
            <person name="Cai J."/>
            <person name="Huang Q."/>
            <person name="Cai Q."/>
            <person name="Li B."/>
            <person name="Bai Y."/>
            <person name="Zhang Z."/>
            <person name="Zhang Y."/>
            <person name="Wang W."/>
            <person name="Li J."/>
            <person name="Wei F."/>
            <person name="Li H."/>
            <person name="Jian M."/>
            <person name="Li J."/>
            <person name="Zhang Z."/>
            <person name="Nielsen R."/>
            <person name="Li D."/>
            <person name="Gu W."/>
            <person name="Yang Z."/>
            <person name="Xuan Z."/>
            <person name="Ryder O.A."/>
            <person name="Leung F.C."/>
            <person name="Zhou Y."/>
            <person name="Cao J."/>
            <person name="Sun X."/>
            <person name="Fu Y."/>
            <person name="Fang X."/>
            <person name="Guo X."/>
            <person name="Wang B."/>
            <person name="Hou R."/>
            <person name="Shen F."/>
            <person name="Mu B."/>
            <person name="Ni P."/>
            <person name="Lin R."/>
            <person name="Qian W."/>
            <person name="Wang G."/>
            <person name="Yu C."/>
            <person name="Nie W."/>
            <person name="Wang J."/>
            <person name="Wu Z."/>
            <person name="Liang H."/>
            <person name="Min J."/>
            <person name="Wu Q."/>
            <person name="Cheng S."/>
            <person name="Ruan J."/>
            <person name="Wang M."/>
            <person name="Shi Z."/>
            <person name="Wen M."/>
            <person name="Liu B."/>
            <person name="Ren X."/>
            <person name="Zheng H."/>
            <person name="Dong D."/>
            <person name="Cook K."/>
            <person name="Shan G."/>
            <person name="Zhang H."/>
            <person name="Kosiol C."/>
            <person name="Xie X."/>
            <person name="Lu Z."/>
            <person name="Zheng H."/>
            <person name="Li Y."/>
            <person name="Steiner C.C."/>
            <person name="Lam T.T."/>
            <person name="Lin S."/>
            <person name="Zhang Q."/>
            <person name="Li G."/>
            <person name="Tian J."/>
            <person name="Gong T."/>
            <person name="Liu H."/>
            <person name="Zhang D."/>
            <person name="Fang L."/>
            <person name="Ye C."/>
            <person name="Zhang J."/>
            <person name="Hu W."/>
            <person name="Xu A."/>
            <person name="Ren Y."/>
            <person name="Zhang G."/>
            <person name="Bruford M.W."/>
            <person name="Li Q."/>
            <person name="Ma L."/>
            <person name="Guo Y."/>
            <person name="An N."/>
            <person name="Hu Y."/>
            <person name="Zheng Y."/>
            <person name="Shi Y."/>
            <person name="Li Z."/>
            <person name="Liu Q."/>
            <person name="Chen Y."/>
            <person name="Zhao J."/>
            <person name="Qu N."/>
            <person name="Zhao S."/>
            <person name="Tian F."/>
            <person name="Wang X."/>
            <person name="Wang H."/>
            <person name="Xu L."/>
            <person name="Liu X."/>
            <person name="Vinar T."/>
            <person name="Wang Y."/>
            <person name="Lam T.W."/>
            <person name="Yiu S.M."/>
            <person name="Liu S."/>
            <person name="Zhang H."/>
            <person name="Li D."/>
            <person name="Huang Y."/>
            <person name="Wang X."/>
            <person name="Yang G."/>
            <person name="Jiang Z."/>
            <person name="Wang J."/>
            <person name="Qin N."/>
            <person name="Li L."/>
            <person name="Li J."/>
            <person name="Bolund L."/>
            <person name="Kristiansen K."/>
            <person name="Wong G.K."/>
            <person name="Olson M."/>
            <person name="Zhang X."/>
            <person name="Li S."/>
            <person name="Yang H."/>
            <person name="Wang J."/>
            <person name="Wang J."/>
        </authorList>
    </citation>
    <scope>NUCLEOTIDE SEQUENCE [LARGE SCALE GENOMIC DNA]</scope>
</reference>
<dbReference type="EC" id="2.3.2.27"/>
<dbReference type="EMBL" id="GL192370">
    <property type="protein sequence ID" value="EFB26549.1"/>
    <property type="molecule type" value="Genomic_DNA"/>
</dbReference>
<dbReference type="RefSeq" id="XP_011234045.1">
    <property type="nucleotide sequence ID" value="XM_011235743.3"/>
</dbReference>
<dbReference type="RefSeq" id="XP_019664538.1">
    <property type="nucleotide sequence ID" value="XM_019808979.2"/>
</dbReference>
<dbReference type="RefSeq" id="XP_019664546.1">
    <property type="nucleotide sequence ID" value="XM_019808987.2"/>
</dbReference>
<dbReference type="RefSeq" id="XP_019664549.1">
    <property type="nucleotide sequence ID" value="XM_019808990.2"/>
</dbReference>
<dbReference type="RefSeq" id="XP_019664552.1">
    <property type="nucleotide sequence ID" value="XM_019808993.2"/>
</dbReference>
<dbReference type="RefSeq" id="XP_034517397.1">
    <property type="nucleotide sequence ID" value="XM_034661506.1"/>
</dbReference>
<dbReference type="RefSeq" id="XP_034517398.1">
    <property type="nucleotide sequence ID" value="XM_034661507.1"/>
</dbReference>
<dbReference type="RefSeq" id="XP_034517399.1">
    <property type="nucleotide sequence ID" value="XM_034661508.1"/>
</dbReference>
<dbReference type="SMR" id="D2GXS7"/>
<dbReference type="STRING" id="9646.ENSAMEP00000019498"/>
<dbReference type="GeneID" id="100468144"/>
<dbReference type="KEGG" id="aml:100468144"/>
<dbReference type="CTD" id="23321"/>
<dbReference type="eggNOG" id="KOG2177">
    <property type="taxonomic scope" value="Eukaryota"/>
</dbReference>
<dbReference type="HOGENOM" id="CLU_008645_5_0_1"/>
<dbReference type="InParanoid" id="D2GXS7"/>
<dbReference type="OrthoDB" id="342730at2759"/>
<dbReference type="UniPathway" id="UPA00143"/>
<dbReference type="Proteomes" id="UP000008912">
    <property type="component" value="Unassembled WGS sequence"/>
</dbReference>
<dbReference type="GO" id="GO:0005737">
    <property type="term" value="C:cytoplasm"/>
    <property type="evidence" value="ECO:0007669"/>
    <property type="project" value="UniProtKB-SubCell"/>
</dbReference>
<dbReference type="GO" id="GO:0061630">
    <property type="term" value="F:ubiquitin protein ligase activity"/>
    <property type="evidence" value="ECO:0007669"/>
    <property type="project" value="TreeGrafter"/>
</dbReference>
<dbReference type="GO" id="GO:0004842">
    <property type="term" value="F:ubiquitin-protein transferase activity"/>
    <property type="evidence" value="ECO:0000250"/>
    <property type="project" value="UniProtKB"/>
</dbReference>
<dbReference type="GO" id="GO:0008270">
    <property type="term" value="F:zinc ion binding"/>
    <property type="evidence" value="ECO:0007669"/>
    <property type="project" value="UniProtKB-KW"/>
</dbReference>
<dbReference type="GO" id="GO:0043161">
    <property type="term" value="P:proteasome-mediated ubiquitin-dependent protein catabolic process"/>
    <property type="evidence" value="ECO:0007669"/>
    <property type="project" value="TreeGrafter"/>
</dbReference>
<dbReference type="GO" id="GO:0000209">
    <property type="term" value="P:protein polyubiquitination"/>
    <property type="evidence" value="ECO:0007669"/>
    <property type="project" value="TreeGrafter"/>
</dbReference>
<dbReference type="GO" id="GO:0043523">
    <property type="term" value="P:regulation of neuron apoptotic process"/>
    <property type="evidence" value="ECO:0000250"/>
    <property type="project" value="UniProtKB"/>
</dbReference>
<dbReference type="CDD" id="cd19824">
    <property type="entry name" value="Bbox2_TRIM2_C-VII"/>
    <property type="match status" value="1"/>
</dbReference>
<dbReference type="CDD" id="cd14960">
    <property type="entry name" value="NHL_TRIM2_like"/>
    <property type="match status" value="1"/>
</dbReference>
<dbReference type="CDD" id="cd16767">
    <property type="entry name" value="RING-HC_TRIM2"/>
    <property type="match status" value="1"/>
</dbReference>
<dbReference type="FunFam" id="2.120.10.30:FF:000007">
    <property type="entry name" value="Putative tripartite motif-containing protein 2"/>
    <property type="match status" value="1"/>
</dbReference>
<dbReference type="FunFam" id="2.120.10.30:FF:000004">
    <property type="entry name" value="Tripartite motif containing 2"/>
    <property type="match status" value="1"/>
</dbReference>
<dbReference type="FunFam" id="3.30.40.10:FF:000032">
    <property type="entry name" value="Tripartite motif containing 2"/>
    <property type="match status" value="1"/>
</dbReference>
<dbReference type="FunFam" id="2.60.40.10:FF:000198">
    <property type="entry name" value="Tripartite motif-containing protein 2"/>
    <property type="match status" value="1"/>
</dbReference>
<dbReference type="FunFam" id="3.30.160.60:FF:000154">
    <property type="entry name" value="Tripartite motif-containing protein 2"/>
    <property type="match status" value="1"/>
</dbReference>
<dbReference type="Gene3D" id="3.30.160.60">
    <property type="entry name" value="Classic Zinc Finger"/>
    <property type="match status" value="1"/>
</dbReference>
<dbReference type="Gene3D" id="2.60.40.10">
    <property type="entry name" value="Immunoglobulins"/>
    <property type="match status" value="1"/>
</dbReference>
<dbReference type="Gene3D" id="2.120.10.30">
    <property type="entry name" value="TolB, C-terminal domain"/>
    <property type="match status" value="2"/>
</dbReference>
<dbReference type="Gene3D" id="3.30.40.10">
    <property type="entry name" value="Zinc/RING finger domain, C3HC4 (zinc finger)"/>
    <property type="match status" value="1"/>
</dbReference>
<dbReference type="InterPro" id="IPR011042">
    <property type="entry name" value="6-blade_b-propeller_TolB-like"/>
</dbReference>
<dbReference type="InterPro" id="IPR003649">
    <property type="entry name" value="Bbox_C"/>
</dbReference>
<dbReference type="InterPro" id="IPR017868">
    <property type="entry name" value="Filamin/ABP280_repeat-like"/>
</dbReference>
<dbReference type="InterPro" id="IPR001298">
    <property type="entry name" value="Filamin/ABP280_rpt"/>
</dbReference>
<dbReference type="InterPro" id="IPR013783">
    <property type="entry name" value="Ig-like_fold"/>
</dbReference>
<dbReference type="InterPro" id="IPR014756">
    <property type="entry name" value="Ig_E-set"/>
</dbReference>
<dbReference type="InterPro" id="IPR001258">
    <property type="entry name" value="NHL_repeat"/>
</dbReference>
<dbReference type="InterPro" id="IPR050952">
    <property type="entry name" value="TRIM-NHL_E3_ligases"/>
</dbReference>
<dbReference type="InterPro" id="IPR027370">
    <property type="entry name" value="Znf-RING_euk"/>
</dbReference>
<dbReference type="InterPro" id="IPR000315">
    <property type="entry name" value="Znf_B-box"/>
</dbReference>
<dbReference type="InterPro" id="IPR001841">
    <property type="entry name" value="Znf_RING"/>
</dbReference>
<dbReference type="InterPro" id="IPR013083">
    <property type="entry name" value="Znf_RING/FYVE/PHD"/>
</dbReference>
<dbReference type="InterPro" id="IPR017907">
    <property type="entry name" value="Znf_RING_CS"/>
</dbReference>
<dbReference type="PANTHER" id="PTHR24104">
    <property type="entry name" value="E3 UBIQUITIN-PROTEIN LIGASE NHLRC1-RELATED"/>
    <property type="match status" value="1"/>
</dbReference>
<dbReference type="PANTHER" id="PTHR24104:SF58">
    <property type="entry name" value="TRIPARTITE MOTIF-CONTAINING PROTEIN 2"/>
    <property type="match status" value="1"/>
</dbReference>
<dbReference type="Pfam" id="PF00630">
    <property type="entry name" value="Filamin"/>
    <property type="match status" value="1"/>
</dbReference>
<dbReference type="Pfam" id="PF01436">
    <property type="entry name" value="NHL"/>
    <property type="match status" value="6"/>
</dbReference>
<dbReference type="Pfam" id="PF00643">
    <property type="entry name" value="zf-B_box"/>
    <property type="match status" value="1"/>
</dbReference>
<dbReference type="Pfam" id="PF13445">
    <property type="entry name" value="zf-RING_UBOX"/>
    <property type="match status" value="1"/>
</dbReference>
<dbReference type="SMART" id="SM00502">
    <property type="entry name" value="BBC"/>
    <property type="match status" value="1"/>
</dbReference>
<dbReference type="SMART" id="SM00336">
    <property type="entry name" value="BBOX"/>
    <property type="match status" value="1"/>
</dbReference>
<dbReference type="SMART" id="SM00557">
    <property type="entry name" value="IG_FLMN"/>
    <property type="match status" value="1"/>
</dbReference>
<dbReference type="SMART" id="SM00184">
    <property type="entry name" value="RING"/>
    <property type="match status" value="1"/>
</dbReference>
<dbReference type="SUPFAM" id="SSF57845">
    <property type="entry name" value="B-box zinc-binding domain"/>
    <property type="match status" value="1"/>
</dbReference>
<dbReference type="SUPFAM" id="SSF81296">
    <property type="entry name" value="E set domains"/>
    <property type="match status" value="1"/>
</dbReference>
<dbReference type="SUPFAM" id="SSF101898">
    <property type="entry name" value="NHL repeat"/>
    <property type="match status" value="1"/>
</dbReference>
<dbReference type="SUPFAM" id="SSF57850">
    <property type="entry name" value="RING/U-box"/>
    <property type="match status" value="1"/>
</dbReference>
<dbReference type="PROSITE" id="PS50194">
    <property type="entry name" value="FILAMIN_REPEAT"/>
    <property type="match status" value="1"/>
</dbReference>
<dbReference type="PROSITE" id="PS51125">
    <property type="entry name" value="NHL"/>
    <property type="match status" value="6"/>
</dbReference>
<dbReference type="PROSITE" id="PS50119">
    <property type="entry name" value="ZF_BBOX"/>
    <property type="match status" value="1"/>
</dbReference>
<dbReference type="PROSITE" id="PS00518">
    <property type="entry name" value="ZF_RING_1"/>
    <property type="match status" value="1"/>
</dbReference>
<dbReference type="PROSITE" id="PS50089">
    <property type="entry name" value="ZF_RING_2"/>
    <property type="match status" value="1"/>
</dbReference>
<sequence>MASEATHIPSPVVRQIDKQFLICSICLERYKNPKVLPCLHTFCERCLQNYIPAHSLTLSCPVCRQTSILPEKGVAALQNNFFITNLMDVLQRTPGSNVEESSILETVTAVAAGKPLSCPNHDGNVMDFYCQSCETAMCRECTEGEHAEHPTVPLKDVVEQHKASLQVQLDAVNKRLPEIDSALQFISEIIHQLTNQKASIVDDIHSTFDELQKTLNVRKSVLLMELEVNYGLKHKVLQSQLDTLLEGQESIKSCSNFTAQALNHGTETEVLLVKKQMSEKLNELADQDFPLHPRENDQLDFIVETEGLKKSIHNLGTILTTNAVASETVATGEGLRQTIIGQPMSVTITTKDKDGELCKTGNAYITAELSTPDGSVADGEILDNKNGTYEFLYTVQKEGDFTLSLRLYDQHIRGSPFKLKVIRSADVSPTTEGVKRRVKSPGSGHVKQKAVKRPASMYSTGKRKENPIEDDLIFRVGTKGRNKGEFTNLQGVAASTSGKILIADSNNQCVQIFSNDGQFKSRFGIRGRSPGQLQRPTGVAVHPSGDIIIADYDNKWVSIFSSDGKFKTKIGSGKLMGPKGVSVDRNGHIIVVDNKACCVFIFQPNGKIVTRFGSRGNGDRQFAGPHFAAVNSNNEIIVTDFHNHSVKVFNQEGEFMLKFGSNGEGNGQFNAPTGVAVDSNGNIIVADWGNSRIQVFDGSGSFLSYINTSADPLYGPQGLALTSDGHVVVADSGNHCFKVYRYLQ</sequence>
<accession>D2GXS7</accession>
<organism>
    <name type="scientific">Ailuropoda melanoleuca</name>
    <name type="common">Giant panda</name>
    <dbReference type="NCBI Taxonomy" id="9646"/>
    <lineage>
        <taxon>Eukaryota</taxon>
        <taxon>Metazoa</taxon>
        <taxon>Chordata</taxon>
        <taxon>Craniata</taxon>
        <taxon>Vertebrata</taxon>
        <taxon>Euteleostomi</taxon>
        <taxon>Mammalia</taxon>
        <taxon>Eutheria</taxon>
        <taxon>Laurasiatheria</taxon>
        <taxon>Carnivora</taxon>
        <taxon>Caniformia</taxon>
        <taxon>Ursidae</taxon>
        <taxon>Ailuropoda</taxon>
    </lineage>
</organism>
<keyword id="KW-0963">Cytoplasm</keyword>
<keyword id="KW-0479">Metal-binding</keyword>
<keyword id="KW-0597">Phosphoprotein</keyword>
<keyword id="KW-1185">Reference proteome</keyword>
<keyword id="KW-0677">Repeat</keyword>
<keyword id="KW-0808">Transferase</keyword>
<keyword id="KW-0832">Ubl conjugation</keyword>
<keyword id="KW-0833">Ubl conjugation pathway</keyword>
<keyword id="KW-0862">Zinc</keyword>
<keyword id="KW-0863">Zinc-finger</keyword>
<comment type="function">
    <text evidence="2 3">UBE2D1-dependent E3 ubiquitin-protein ligase that mediates the ubiquitination of NEFL and of phosphorylated BCL2L11. Plays a neuroprotective function. May play a role in neuronal rapid ischemic tolerance. Plays a role in antiviral immunity and limits New World arenavirus infection independently of its ubiquitin ligase activity.</text>
</comment>
<comment type="catalytic activity">
    <reaction>
        <text>S-ubiquitinyl-[E2 ubiquitin-conjugating enzyme]-L-cysteine + [acceptor protein]-L-lysine = [E2 ubiquitin-conjugating enzyme]-L-cysteine + N(6)-ubiquitinyl-[acceptor protein]-L-lysine.</text>
        <dbReference type="EC" id="2.3.2.27"/>
    </reaction>
</comment>
<comment type="pathway">
    <text>Protein modification; protein ubiquitination.</text>
</comment>
<comment type="subunit">
    <text evidence="2 3">Forms homooligomers (By similarity). Interacts with TRIM3; this interaction reduces TRIM2 activity (By similarity). Interacts with myosin V; myosin V may not be a substrate for ubiquitination. Interacts with NEFL. Interacts with phosphorylated BCL2L11. Interacts with SIRPA (By similarity).</text>
</comment>
<comment type="subcellular location">
    <subcellularLocation>
        <location evidence="3">Cytoplasm</location>
    </subcellularLocation>
</comment>
<comment type="domain">
    <text evidence="3">The interaction with myosin V is dependent upon its NHL repeats, which form a beta-propeller (NHL) domain containing six blades.</text>
</comment>
<comment type="PTM">
    <text evidence="3">RING-type zinc finger-dependent and UBE2D1-dependent autoubiquitination.</text>
</comment>
<comment type="similarity">
    <text evidence="7">Belongs to the TRIM/RBCC family.</text>
</comment>
<protein>
    <recommendedName>
        <fullName>Tripartite motif-containing protein 2</fullName>
        <ecNumber>2.3.2.27</ecNumber>
    </recommendedName>
    <alternativeName>
        <fullName>E3 ubiquitin-protein ligase TRIM2</fullName>
    </alternativeName>
    <alternativeName>
        <fullName evidence="7">RING-type E3 ubiquitin transferase TRIM2</fullName>
    </alternativeName>
</protein>
<proteinExistence type="inferred from homology"/>
<evidence type="ECO:0000250" key="1">
    <source>
        <dbReference type="UniProtKB" id="D3ZQG6"/>
    </source>
</evidence>
<evidence type="ECO:0000250" key="2">
    <source>
        <dbReference type="UniProtKB" id="Q9C040"/>
    </source>
</evidence>
<evidence type="ECO:0000250" key="3">
    <source>
        <dbReference type="UniProtKB" id="Q9ESN6"/>
    </source>
</evidence>
<evidence type="ECO:0000255" key="4">
    <source>
        <dbReference type="PROSITE-ProRule" id="PRU00024"/>
    </source>
</evidence>
<evidence type="ECO:0000255" key="5">
    <source>
        <dbReference type="PROSITE-ProRule" id="PRU00175"/>
    </source>
</evidence>
<evidence type="ECO:0000256" key="6">
    <source>
        <dbReference type="SAM" id="MobiDB-lite"/>
    </source>
</evidence>
<evidence type="ECO:0000305" key="7"/>
<feature type="chain" id="PRO_0000413605" description="Tripartite motif-containing protein 2">
    <location>
        <begin position="1"/>
        <end position="744"/>
    </location>
</feature>
<feature type="repeat" description="Filamin">
    <location>
        <begin position="320"/>
        <end position="421"/>
    </location>
</feature>
<feature type="repeat" description="NHL 1">
    <location>
        <begin position="473"/>
        <end position="516"/>
    </location>
</feature>
<feature type="repeat" description="NHL 2">
    <location>
        <begin position="520"/>
        <end position="563"/>
    </location>
</feature>
<feature type="repeat" description="NHL 3">
    <location>
        <begin position="564"/>
        <end position="605"/>
    </location>
</feature>
<feature type="repeat" description="NHL 4">
    <location>
        <begin position="609"/>
        <end position="652"/>
    </location>
</feature>
<feature type="repeat" description="NHL 5">
    <location>
        <begin position="656"/>
        <end position="699"/>
    </location>
</feature>
<feature type="repeat" description="NHL 6">
    <location>
        <begin position="700"/>
        <end position="743"/>
    </location>
</feature>
<feature type="zinc finger region" description="RING-type" evidence="5">
    <location>
        <begin position="23"/>
        <end position="64"/>
    </location>
</feature>
<feature type="zinc finger region" description="B box-type" evidence="4">
    <location>
        <begin position="113"/>
        <end position="154"/>
    </location>
</feature>
<feature type="region of interest" description="Disordered" evidence="6">
    <location>
        <begin position="432"/>
        <end position="462"/>
    </location>
</feature>
<feature type="binding site" evidence="4">
    <location>
        <position position="118"/>
    </location>
    <ligand>
        <name>Zn(2+)</name>
        <dbReference type="ChEBI" id="CHEBI:29105"/>
    </ligand>
</feature>
<feature type="binding site" evidence="4">
    <location>
        <position position="121"/>
    </location>
    <ligand>
        <name>Zn(2+)</name>
        <dbReference type="ChEBI" id="CHEBI:29105"/>
    </ligand>
</feature>
<feature type="binding site" evidence="4">
    <location>
        <position position="141"/>
    </location>
    <ligand>
        <name>Zn(2+)</name>
        <dbReference type="ChEBI" id="CHEBI:29105"/>
    </ligand>
</feature>
<feature type="binding site" evidence="4">
    <location>
        <position position="146"/>
    </location>
    <ligand>
        <name>Zn(2+)</name>
        <dbReference type="ChEBI" id="CHEBI:29105"/>
    </ligand>
</feature>
<feature type="modified residue" description="Phosphoserine" evidence="1">
    <location>
        <position position="10"/>
    </location>
</feature>
<feature type="modified residue" description="Phosphothreonine" evidence="3">
    <location>
        <position position="371"/>
    </location>
</feature>
<feature type="modified residue" description="Phosphoserine" evidence="3">
    <location>
        <position position="375"/>
    </location>
</feature>
<feature type="modified residue" description="Phosphoserine" evidence="3">
    <location>
        <position position="424"/>
    </location>
</feature>
<feature type="modified residue" description="Phosphoserine" evidence="3">
    <location>
        <position position="428"/>
    </location>
</feature>
<gene>
    <name type="primary">TRIM2</name>
</gene>